<comment type="function">
    <text>Actins are highly conserved proteins that are involved in various types of cell motility and are ubiquitously expressed in all eukaryotic cells.</text>
</comment>
<comment type="catalytic activity">
    <reaction evidence="4">
        <text>ATP + H2O = ADP + phosphate + H(+)</text>
        <dbReference type="Rhea" id="RHEA:13065"/>
        <dbReference type="ChEBI" id="CHEBI:15377"/>
        <dbReference type="ChEBI" id="CHEBI:15378"/>
        <dbReference type="ChEBI" id="CHEBI:30616"/>
        <dbReference type="ChEBI" id="CHEBI:43474"/>
        <dbReference type="ChEBI" id="CHEBI:456216"/>
    </reaction>
</comment>
<comment type="subunit">
    <text>Polymerization of globular actin (G-actin) leads to a structural filament (F-actin) in the form of a two-stranded helix. Each actin can bind to 4 others.</text>
</comment>
<comment type="subcellular location">
    <subcellularLocation>
        <location>Cytoplasm</location>
        <location>Cytoskeleton</location>
    </subcellularLocation>
</comment>
<comment type="PTM">
    <molecule>Actin, aortic smooth muscle, intermediate form</molecule>
    <text evidence="2">N-terminal cleavage of acetylated cysteine of intermediate muscle actin by ACTMAP.</text>
</comment>
<comment type="PTM">
    <text evidence="2">Oxidation of Met-46 and Met-49 by MICALs (MICAL1, MICAL2 or MICAL3) to form methionine sulfoxide promotes actin filament depolymerization. MICAL1 and MICAL2 produce the (R)-S-oxide form. The (R)-S-oxide form is reverted by MSRB1 and MSRB2, which promotes actin repolymerization.</text>
</comment>
<comment type="PTM">
    <text evidence="1">Methylated at His-75 by SETD3.</text>
</comment>
<comment type="miscellaneous">
    <text>In vertebrates 3 main groups of actin isoforms, alpha, beta and gamma have been identified. The alpha actins are found in muscle tissues and are a major constituent of the contractile apparatus. The beta and gamma actins coexist in most cell types as components of the cytoskeleton and as mediators of internal cell motility.</text>
</comment>
<comment type="similarity">
    <text evidence="5">Belongs to the actin family.</text>
</comment>
<evidence type="ECO:0000250" key="1">
    <source>
        <dbReference type="UniProtKB" id="P62736"/>
    </source>
</evidence>
<evidence type="ECO:0000250" key="2">
    <source>
        <dbReference type="UniProtKB" id="P62737"/>
    </source>
</evidence>
<evidence type="ECO:0000250" key="3">
    <source>
        <dbReference type="UniProtKB" id="P62739"/>
    </source>
</evidence>
<evidence type="ECO:0000250" key="4">
    <source>
        <dbReference type="UniProtKB" id="P68137"/>
    </source>
</evidence>
<evidence type="ECO:0000305" key="5"/>
<sequence length="377" mass="41995">MCEEEDSTALVCDNGSGLCKAGFAGDDAPRAVFPSIVGRPRHQGVMVGMGQKDSYVGDEAQSKRGILTLKYPIEHGIITNWDDMEKIWHHSFYNELRVAPEEHPTLLTEAPLNPKANREKMTQIMFETFNVPAMYVAIQAVLSLYASGRTTGIVLDSGDGVTHNVPIYEGYALPHAIMRLDLAGRDLTDYLMKILSERGYSFVTTAEREIVRDIKEKLCYVALDFENEMATAASSSSLEKSYELPDGQVITIGNERFRCPETLFQPSFIGMESAGIHETTYNSIMKCDIDIRKDLYANNVLSGGTTMYPGIADRMQKEITALAPSTMKIKIIAPPERKYSVWIGGSILASLSTFQQMWISKQEYDEAGPSIVHRKCF</sequence>
<reference key="1">
    <citation type="journal article" date="1986" name="J. Biol. Chem.">
        <title>Structure and complete nucleotide sequence of the chicken alpha-smooth muscle (aortic) actin gene. An actin gene which produces multiple messenger RNAs.</title>
        <authorList>
            <person name="Carroll S.L."/>
            <person name="Bergsma D.J."/>
            <person name="Schwartz R.J."/>
        </authorList>
    </citation>
    <scope>NUCLEOTIDE SEQUENCE [GENOMIC DNA]</scope>
</reference>
<keyword id="KW-0007">Acetylation</keyword>
<keyword id="KW-0067">ATP-binding</keyword>
<keyword id="KW-0963">Cytoplasm</keyword>
<keyword id="KW-0206">Cytoskeleton</keyword>
<keyword id="KW-0378">Hydrolase</keyword>
<keyword id="KW-0488">Methylation</keyword>
<keyword id="KW-0514">Muscle protein</keyword>
<keyword id="KW-0547">Nucleotide-binding</keyword>
<keyword id="KW-0558">Oxidation</keyword>
<keyword id="KW-1185">Reference proteome</keyword>
<name>ACTA_CHICK</name>
<proteinExistence type="inferred from homology"/>
<feature type="initiator methionine" description="Removed" evidence="2">
    <location>
        <position position="1"/>
    </location>
</feature>
<feature type="chain" id="PRO_0000442611" description="Actin, aortic smooth muscle, intermediate form" evidence="2">
    <location>
        <begin position="2"/>
        <end position="377"/>
    </location>
</feature>
<feature type="chain" id="PRO_0000442612" description="Actin, aortic smooth muscle">
    <location>
        <begin position="3"/>
        <end position="377"/>
    </location>
</feature>
<feature type="modified residue" description="N-acetylcysteine; in intermediate form" evidence="2">
    <location>
        <position position="2"/>
    </location>
</feature>
<feature type="modified residue" description="N-acetylglutamate; in Actin, aortic smooth muscle" evidence="1">
    <location>
        <position position="3"/>
    </location>
</feature>
<feature type="modified residue" description="Methionine (R)-sulfoxide" evidence="2">
    <location>
        <position position="46"/>
    </location>
</feature>
<feature type="modified residue" description="Methionine (R)-sulfoxide" evidence="2">
    <location>
        <position position="49"/>
    </location>
</feature>
<feature type="modified residue" description="Tele-methylhistidine" evidence="3">
    <location>
        <position position="75"/>
    </location>
</feature>
<accession>P08023</accession>
<organism>
    <name type="scientific">Gallus gallus</name>
    <name type="common">Chicken</name>
    <dbReference type="NCBI Taxonomy" id="9031"/>
    <lineage>
        <taxon>Eukaryota</taxon>
        <taxon>Metazoa</taxon>
        <taxon>Chordata</taxon>
        <taxon>Craniata</taxon>
        <taxon>Vertebrata</taxon>
        <taxon>Euteleostomi</taxon>
        <taxon>Archelosauria</taxon>
        <taxon>Archosauria</taxon>
        <taxon>Dinosauria</taxon>
        <taxon>Saurischia</taxon>
        <taxon>Theropoda</taxon>
        <taxon>Coelurosauria</taxon>
        <taxon>Aves</taxon>
        <taxon>Neognathae</taxon>
        <taxon>Galloanserae</taxon>
        <taxon>Galliformes</taxon>
        <taxon>Phasianidae</taxon>
        <taxon>Phasianinae</taxon>
        <taxon>Gallus</taxon>
    </lineage>
</organism>
<dbReference type="EC" id="3.6.4.-" evidence="4"/>
<dbReference type="EMBL" id="M13756">
    <property type="protein sequence ID" value="AAB12010.1"/>
    <property type="molecule type" value="Genomic_DNA"/>
</dbReference>
<dbReference type="RefSeq" id="NP_001026400.1">
    <property type="nucleotide sequence ID" value="NM_001031229.1"/>
</dbReference>
<dbReference type="SMR" id="P08023"/>
<dbReference type="FunCoup" id="P08023">
    <property type="interactions" value="1318"/>
</dbReference>
<dbReference type="STRING" id="9031.ENSGALP00000067749"/>
<dbReference type="PaxDb" id="9031-ENSGALP00000010239"/>
<dbReference type="GeneID" id="423787"/>
<dbReference type="KEGG" id="gga:423787"/>
<dbReference type="CTD" id="59"/>
<dbReference type="VEuPathDB" id="HostDB:geneid_423787"/>
<dbReference type="eggNOG" id="KOG0676">
    <property type="taxonomic scope" value="Eukaryota"/>
</dbReference>
<dbReference type="InParanoid" id="P08023"/>
<dbReference type="OrthoDB" id="9092295at2759"/>
<dbReference type="PhylomeDB" id="P08023"/>
<dbReference type="PRO" id="PR:P08023"/>
<dbReference type="Proteomes" id="UP000000539">
    <property type="component" value="Unassembled WGS sequence"/>
</dbReference>
<dbReference type="GO" id="GO:0015629">
    <property type="term" value="C:actin cytoskeleton"/>
    <property type="evidence" value="ECO:0000318"/>
    <property type="project" value="GO_Central"/>
</dbReference>
<dbReference type="GO" id="GO:0044297">
    <property type="term" value="C:cell body"/>
    <property type="evidence" value="ECO:0000314"/>
    <property type="project" value="AgBase"/>
</dbReference>
<dbReference type="GO" id="GO:0005737">
    <property type="term" value="C:cytoplasm"/>
    <property type="evidence" value="ECO:0000314"/>
    <property type="project" value="AgBase"/>
</dbReference>
<dbReference type="GO" id="GO:0030175">
    <property type="term" value="C:filopodium"/>
    <property type="evidence" value="ECO:0000314"/>
    <property type="project" value="AgBase"/>
</dbReference>
<dbReference type="GO" id="GO:0030027">
    <property type="term" value="C:lamellipodium"/>
    <property type="evidence" value="ECO:0000314"/>
    <property type="project" value="AgBase"/>
</dbReference>
<dbReference type="GO" id="GO:0005524">
    <property type="term" value="F:ATP binding"/>
    <property type="evidence" value="ECO:0007669"/>
    <property type="project" value="UniProtKB-KW"/>
</dbReference>
<dbReference type="GO" id="GO:0016787">
    <property type="term" value="F:hydrolase activity"/>
    <property type="evidence" value="ECO:0007669"/>
    <property type="project" value="UniProtKB-KW"/>
</dbReference>
<dbReference type="GO" id="GO:0090131">
    <property type="term" value="P:mesenchyme migration"/>
    <property type="evidence" value="ECO:0000315"/>
    <property type="project" value="AgBase"/>
</dbReference>
<dbReference type="GO" id="GO:0010628">
    <property type="term" value="P:positive regulation of gene expression"/>
    <property type="evidence" value="ECO:0000314"/>
    <property type="project" value="AgBase"/>
</dbReference>
<dbReference type="CDD" id="cd10224">
    <property type="entry name" value="ASKHA_NBD_actin"/>
    <property type="match status" value="1"/>
</dbReference>
<dbReference type="FunFam" id="3.30.420.40:FF:000131">
    <property type="entry name" value="Actin, alpha skeletal muscle"/>
    <property type="match status" value="1"/>
</dbReference>
<dbReference type="FunFam" id="3.30.420.40:FF:000291">
    <property type="entry name" value="Actin, alpha skeletal muscle"/>
    <property type="match status" value="1"/>
</dbReference>
<dbReference type="FunFam" id="3.90.640.10:FF:000047">
    <property type="entry name" value="Actin, alpha skeletal muscle"/>
    <property type="match status" value="1"/>
</dbReference>
<dbReference type="FunFam" id="3.30.420.40:FF:000058">
    <property type="entry name" value="Putative actin-related protein 5"/>
    <property type="match status" value="1"/>
</dbReference>
<dbReference type="Gene3D" id="3.30.420.40">
    <property type="match status" value="2"/>
</dbReference>
<dbReference type="Gene3D" id="3.90.640.10">
    <property type="entry name" value="Actin, Chain A, domain 4"/>
    <property type="match status" value="1"/>
</dbReference>
<dbReference type="InterPro" id="IPR004000">
    <property type="entry name" value="Actin"/>
</dbReference>
<dbReference type="InterPro" id="IPR020902">
    <property type="entry name" value="Actin/actin-like_CS"/>
</dbReference>
<dbReference type="InterPro" id="IPR004001">
    <property type="entry name" value="Actin_CS"/>
</dbReference>
<dbReference type="InterPro" id="IPR043129">
    <property type="entry name" value="ATPase_NBD"/>
</dbReference>
<dbReference type="PANTHER" id="PTHR11937">
    <property type="entry name" value="ACTIN"/>
    <property type="match status" value="1"/>
</dbReference>
<dbReference type="Pfam" id="PF00022">
    <property type="entry name" value="Actin"/>
    <property type="match status" value="1"/>
</dbReference>
<dbReference type="PRINTS" id="PR00190">
    <property type="entry name" value="ACTIN"/>
</dbReference>
<dbReference type="SMART" id="SM00268">
    <property type="entry name" value="ACTIN"/>
    <property type="match status" value="1"/>
</dbReference>
<dbReference type="SUPFAM" id="SSF53067">
    <property type="entry name" value="Actin-like ATPase domain"/>
    <property type="match status" value="2"/>
</dbReference>
<dbReference type="PROSITE" id="PS00406">
    <property type="entry name" value="ACTINS_1"/>
    <property type="match status" value="1"/>
</dbReference>
<dbReference type="PROSITE" id="PS00432">
    <property type="entry name" value="ACTINS_2"/>
    <property type="match status" value="1"/>
</dbReference>
<dbReference type="PROSITE" id="PS01132">
    <property type="entry name" value="ACTINS_ACT_LIKE"/>
    <property type="match status" value="1"/>
</dbReference>
<protein>
    <recommendedName>
        <fullName>Actin, aortic smooth muscle</fullName>
        <ecNumber evidence="4">3.6.4.-</ecNumber>
    </recommendedName>
    <alternativeName>
        <fullName>Alpha-actin</fullName>
    </alternativeName>
    <component>
        <recommendedName>
            <fullName>Actin, aortic smooth muscle, intermediate form</fullName>
        </recommendedName>
    </component>
</protein>
<gene>
    <name type="primary">ACTA2</name>
</gene>